<feature type="chain" id="PRO_0000294364" description="Zinc finger protein 813">
    <location>
        <begin position="1"/>
        <end position="617"/>
    </location>
</feature>
<feature type="domain" description="KRAB" evidence="2">
    <location>
        <begin position="8"/>
        <end position="81"/>
    </location>
</feature>
<feature type="zinc finger region" description="C2H2-type 1; degenerate" evidence="1">
    <location>
        <begin position="215"/>
        <end position="237"/>
    </location>
</feature>
<feature type="zinc finger region" description="C2H2-type 2" evidence="1">
    <location>
        <begin position="243"/>
        <end position="265"/>
    </location>
</feature>
<feature type="zinc finger region" description="C2H2-type 3" evidence="1">
    <location>
        <begin position="271"/>
        <end position="293"/>
    </location>
</feature>
<feature type="zinc finger region" description="C2H2-type 4" evidence="1">
    <location>
        <begin position="299"/>
        <end position="321"/>
    </location>
</feature>
<feature type="zinc finger region" description="C2H2-type 5" evidence="1">
    <location>
        <begin position="327"/>
        <end position="349"/>
    </location>
</feature>
<feature type="zinc finger region" description="C2H2-type 6" evidence="1">
    <location>
        <begin position="355"/>
        <end position="377"/>
    </location>
</feature>
<feature type="zinc finger region" description="C2H2-type 7" evidence="1">
    <location>
        <begin position="383"/>
        <end position="405"/>
    </location>
</feature>
<feature type="zinc finger region" description="C2H2-type 8" evidence="1">
    <location>
        <begin position="411"/>
        <end position="433"/>
    </location>
</feature>
<feature type="zinc finger region" description="C2H2-type 9" evidence="1">
    <location>
        <begin position="439"/>
        <end position="461"/>
    </location>
</feature>
<feature type="zinc finger region" description="C2H2-type 10" evidence="1">
    <location>
        <begin position="467"/>
        <end position="489"/>
    </location>
</feature>
<feature type="zinc finger region" description="C2H2-type 11" evidence="1">
    <location>
        <begin position="495"/>
        <end position="517"/>
    </location>
</feature>
<feature type="zinc finger region" description="C2H2-type 12" evidence="1">
    <location>
        <begin position="523"/>
        <end position="545"/>
    </location>
</feature>
<feature type="zinc finger region" description="C2H2-type 13" evidence="1">
    <location>
        <begin position="551"/>
        <end position="573"/>
    </location>
</feature>
<feature type="zinc finger region" description="C2H2-type 14" evidence="1">
    <location>
        <begin position="579"/>
        <end position="601"/>
    </location>
</feature>
<protein>
    <recommendedName>
        <fullName>Zinc finger protein 813</fullName>
    </recommendedName>
</protein>
<reference key="1">
    <citation type="submission" date="2004-11" db="EMBL/GenBank/DDBJ databases">
        <authorList>
            <consortium name="The German cDNA consortium"/>
        </authorList>
    </citation>
    <scope>NUCLEOTIDE SEQUENCE [LARGE SCALE MRNA]</scope>
    <source>
        <tissue>Kidney</tissue>
    </source>
</reference>
<name>ZN813_PONAB</name>
<gene>
    <name type="primary">ZNF813</name>
</gene>
<evidence type="ECO:0000255" key="1">
    <source>
        <dbReference type="PROSITE-ProRule" id="PRU00042"/>
    </source>
</evidence>
<evidence type="ECO:0000255" key="2">
    <source>
        <dbReference type="PROSITE-ProRule" id="PRU00119"/>
    </source>
</evidence>
<evidence type="ECO:0000305" key="3"/>
<comment type="function">
    <text>May be involved in transcriptional regulation.</text>
</comment>
<comment type="subcellular location">
    <subcellularLocation>
        <location evidence="3">Nucleus</location>
    </subcellularLocation>
</comment>
<comment type="similarity">
    <text evidence="3">Belongs to the krueppel C2H2-type zinc-finger protein family.</text>
</comment>
<accession>Q5RER9</accession>
<keyword id="KW-0238">DNA-binding</keyword>
<keyword id="KW-0479">Metal-binding</keyword>
<keyword id="KW-0539">Nucleus</keyword>
<keyword id="KW-1185">Reference proteome</keyword>
<keyword id="KW-0677">Repeat</keyword>
<keyword id="KW-0804">Transcription</keyword>
<keyword id="KW-0805">Transcription regulation</keyword>
<keyword id="KW-0862">Zinc</keyword>
<keyword id="KW-0863">Zinc-finger</keyword>
<proteinExistence type="evidence at transcript level"/>
<organism>
    <name type="scientific">Pongo abelii</name>
    <name type="common">Sumatran orangutan</name>
    <name type="synonym">Pongo pygmaeus abelii</name>
    <dbReference type="NCBI Taxonomy" id="9601"/>
    <lineage>
        <taxon>Eukaryota</taxon>
        <taxon>Metazoa</taxon>
        <taxon>Chordata</taxon>
        <taxon>Craniata</taxon>
        <taxon>Vertebrata</taxon>
        <taxon>Euteleostomi</taxon>
        <taxon>Mammalia</taxon>
        <taxon>Eutheria</taxon>
        <taxon>Euarchontoglires</taxon>
        <taxon>Primates</taxon>
        <taxon>Haplorrhini</taxon>
        <taxon>Catarrhini</taxon>
        <taxon>Hominidae</taxon>
        <taxon>Pongo</taxon>
    </lineage>
</organism>
<dbReference type="EMBL" id="CR857447">
    <property type="protein sequence ID" value="CAH89738.1"/>
    <property type="molecule type" value="mRNA"/>
</dbReference>
<dbReference type="RefSeq" id="NP_001124795.1">
    <property type="nucleotide sequence ID" value="NM_001131323.1"/>
</dbReference>
<dbReference type="SMR" id="Q5RER9"/>
<dbReference type="GeneID" id="100171648"/>
<dbReference type="KEGG" id="pon:100171648"/>
<dbReference type="CTD" id="126017"/>
<dbReference type="eggNOG" id="KOG1721">
    <property type="taxonomic scope" value="Eukaryota"/>
</dbReference>
<dbReference type="InParanoid" id="Q5RER9"/>
<dbReference type="OrthoDB" id="9507676at2759"/>
<dbReference type="Proteomes" id="UP000001595">
    <property type="component" value="Unplaced"/>
</dbReference>
<dbReference type="GO" id="GO:0005634">
    <property type="term" value="C:nucleus"/>
    <property type="evidence" value="ECO:0007669"/>
    <property type="project" value="UniProtKB-SubCell"/>
</dbReference>
<dbReference type="GO" id="GO:0000981">
    <property type="term" value="F:DNA-binding transcription factor activity, RNA polymerase II-specific"/>
    <property type="evidence" value="ECO:0007669"/>
    <property type="project" value="TreeGrafter"/>
</dbReference>
<dbReference type="GO" id="GO:0000978">
    <property type="term" value="F:RNA polymerase II cis-regulatory region sequence-specific DNA binding"/>
    <property type="evidence" value="ECO:0007669"/>
    <property type="project" value="TreeGrafter"/>
</dbReference>
<dbReference type="GO" id="GO:0008270">
    <property type="term" value="F:zinc ion binding"/>
    <property type="evidence" value="ECO:0007669"/>
    <property type="project" value="UniProtKB-KW"/>
</dbReference>
<dbReference type="CDD" id="cd07765">
    <property type="entry name" value="KRAB_A-box"/>
    <property type="match status" value="1"/>
</dbReference>
<dbReference type="FunFam" id="3.30.160.60:FF:002209">
    <property type="match status" value="1"/>
</dbReference>
<dbReference type="FunFam" id="3.30.160.60:FF:004137">
    <property type="match status" value="1"/>
</dbReference>
<dbReference type="FunFam" id="3.30.160.60:FF:000745">
    <property type="entry name" value="zinc finger protein 181 isoform X1"/>
    <property type="match status" value="2"/>
</dbReference>
<dbReference type="FunFam" id="3.30.160.60:FF:000295">
    <property type="entry name" value="zinc finger protein 19"/>
    <property type="match status" value="1"/>
</dbReference>
<dbReference type="FunFam" id="3.30.160.60:FF:002402">
    <property type="entry name" value="Zinc finger protein 347"/>
    <property type="match status" value="1"/>
</dbReference>
<dbReference type="FunFam" id="3.30.160.60:FF:002090">
    <property type="entry name" value="Zinc finger protein 473"/>
    <property type="match status" value="2"/>
</dbReference>
<dbReference type="FunFam" id="3.30.160.60:FF:000015">
    <property type="entry name" value="Zinc finger protein 569"/>
    <property type="match status" value="2"/>
</dbReference>
<dbReference type="FunFam" id="3.30.160.60:FF:001627">
    <property type="entry name" value="Zinc finger protein 655"/>
    <property type="match status" value="1"/>
</dbReference>
<dbReference type="FunFam" id="3.30.160.60:FF:000188">
    <property type="entry name" value="Zinc finger protein 787"/>
    <property type="match status" value="1"/>
</dbReference>
<dbReference type="FunFam" id="3.30.160.60:FF:000896">
    <property type="entry name" value="Zinc finger protein 805"/>
    <property type="match status" value="1"/>
</dbReference>
<dbReference type="FunFam" id="3.30.160.60:FF:002289">
    <property type="entry name" value="Zinc finger protein 813"/>
    <property type="match status" value="1"/>
</dbReference>
<dbReference type="FunFam" id="3.30.160.60:FF:002292">
    <property type="entry name" value="Zinc finger protein 816"/>
    <property type="match status" value="1"/>
</dbReference>
<dbReference type="Gene3D" id="6.10.140.140">
    <property type="match status" value="1"/>
</dbReference>
<dbReference type="Gene3D" id="3.30.160.60">
    <property type="entry name" value="Classic Zinc Finger"/>
    <property type="match status" value="14"/>
</dbReference>
<dbReference type="InterPro" id="IPR001909">
    <property type="entry name" value="KRAB"/>
</dbReference>
<dbReference type="InterPro" id="IPR036051">
    <property type="entry name" value="KRAB_dom_sf"/>
</dbReference>
<dbReference type="InterPro" id="IPR036236">
    <property type="entry name" value="Znf_C2H2_sf"/>
</dbReference>
<dbReference type="InterPro" id="IPR013087">
    <property type="entry name" value="Znf_C2H2_type"/>
</dbReference>
<dbReference type="PANTHER" id="PTHR23226:SF416">
    <property type="entry name" value="FI01424P"/>
    <property type="match status" value="1"/>
</dbReference>
<dbReference type="PANTHER" id="PTHR23226">
    <property type="entry name" value="ZINC FINGER AND SCAN DOMAIN-CONTAINING"/>
    <property type="match status" value="1"/>
</dbReference>
<dbReference type="Pfam" id="PF01352">
    <property type="entry name" value="KRAB"/>
    <property type="match status" value="1"/>
</dbReference>
<dbReference type="Pfam" id="PF00096">
    <property type="entry name" value="zf-C2H2"/>
    <property type="match status" value="10"/>
</dbReference>
<dbReference type="Pfam" id="PF13912">
    <property type="entry name" value="zf-C2H2_6"/>
    <property type="match status" value="1"/>
</dbReference>
<dbReference type="SMART" id="SM00349">
    <property type="entry name" value="KRAB"/>
    <property type="match status" value="1"/>
</dbReference>
<dbReference type="SMART" id="SM00355">
    <property type="entry name" value="ZnF_C2H2"/>
    <property type="match status" value="13"/>
</dbReference>
<dbReference type="SUPFAM" id="SSF57667">
    <property type="entry name" value="beta-beta-alpha zinc fingers"/>
    <property type="match status" value="8"/>
</dbReference>
<dbReference type="SUPFAM" id="SSF109640">
    <property type="entry name" value="KRAB domain (Kruppel-associated box)"/>
    <property type="match status" value="1"/>
</dbReference>
<dbReference type="PROSITE" id="PS50805">
    <property type="entry name" value="KRAB"/>
    <property type="match status" value="1"/>
</dbReference>
<dbReference type="PROSITE" id="PS00028">
    <property type="entry name" value="ZINC_FINGER_C2H2_1"/>
    <property type="match status" value="13"/>
</dbReference>
<dbReference type="PROSITE" id="PS50157">
    <property type="entry name" value="ZINC_FINGER_C2H2_2"/>
    <property type="match status" value="14"/>
</dbReference>
<sequence>MALSQGLLTFRDVAIEFSQEEWKCLDPAQRTLYRDVMLENYRNLVSLDISSKCMMKEFLSTAQGNREVFHTGTLERHESHHIGDFCFQETDKDIHNLEFQWQEDERNGHEVLMTEIKKLTGSTDQYNQSHARNKPIKDQLGSSFYSHLPELHIFQTQGKIDNQVEKSINNASSISTAQRISCRPKTHISNNYGNNFLNSLLLTQKQEVRMREKSFQYNESGKAFNYSSLLRKHQIIHLGEKQYKCDVCGKVFNRKRNLACHRRCHTGEKPYRCNECGKTFSQTYSLTCHRRLHTGEKPYKCEECDKAFSFKSNLKRHRRIHAGEKPYKCNECGKTFSQTSSLTCHRRLHTGEKPYKCNECGKTFSWKSSLTCHHRLHTGEKPYKCNECGKTFSQELTLKCHRRLHTGEKPYKCNECGKVFNKKANLARHHRLHSGEKPYKCTECVKTFSRNSALVIHKAIHIGEKRYKCNECGKTFSRISALVIHTAVHTGEKPYKCNECGKGFYRKAHLVCHHRLHTGEKPYKCNECGKVFNRKTHLAHHHRLHTGDKPYKCNECGKVFNQKAHLARHHRLHTGEKPYKCTECGKVFNQKANLARHHRLHTGEKPYKFSECGTVLN</sequence>